<gene>
    <name evidence="1" type="primary">proQ</name>
    <name type="ordered locus">ESA_01419</name>
</gene>
<reference key="1">
    <citation type="journal article" date="2010" name="PLoS ONE">
        <title>Genome sequence of Cronobacter sakazakii BAA-894 and comparative genomic hybridization analysis with other Cronobacter species.</title>
        <authorList>
            <person name="Kucerova E."/>
            <person name="Clifton S.W."/>
            <person name="Xia X.Q."/>
            <person name="Long F."/>
            <person name="Porwollik S."/>
            <person name="Fulton L."/>
            <person name="Fronick C."/>
            <person name="Minx P."/>
            <person name="Kyung K."/>
            <person name="Warren W."/>
            <person name="Fulton R."/>
            <person name="Feng D."/>
            <person name="Wollam A."/>
            <person name="Shah N."/>
            <person name="Bhonagiri V."/>
            <person name="Nash W.E."/>
            <person name="Hallsworth-Pepin K."/>
            <person name="Wilson R.K."/>
            <person name="McClelland M."/>
            <person name="Forsythe S.J."/>
        </authorList>
    </citation>
    <scope>NUCLEOTIDE SEQUENCE [LARGE SCALE GENOMIC DNA]</scope>
    <source>
        <strain>ATCC BAA-894</strain>
    </source>
</reference>
<keyword id="KW-0143">Chaperone</keyword>
<keyword id="KW-0963">Cytoplasm</keyword>
<keyword id="KW-1185">Reference proteome</keyword>
<keyword id="KW-0694">RNA-binding</keyword>
<organism>
    <name type="scientific">Cronobacter sakazakii (strain ATCC BAA-894)</name>
    <name type="common">Enterobacter sakazakii</name>
    <dbReference type="NCBI Taxonomy" id="290339"/>
    <lineage>
        <taxon>Bacteria</taxon>
        <taxon>Pseudomonadati</taxon>
        <taxon>Pseudomonadota</taxon>
        <taxon>Gammaproteobacteria</taxon>
        <taxon>Enterobacterales</taxon>
        <taxon>Enterobacteriaceae</taxon>
        <taxon>Cronobacter</taxon>
    </lineage>
</organism>
<feature type="chain" id="PRO_1000046556" description="RNA chaperone ProQ">
    <location>
        <begin position="1"/>
        <end position="230"/>
    </location>
</feature>
<feature type="region of interest" description="Disordered" evidence="2">
    <location>
        <begin position="106"/>
        <end position="181"/>
    </location>
</feature>
<feature type="compositionally biased region" description="Basic and acidic residues" evidence="2">
    <location>
        <begin position="146"/>
        <end position="155"/>
    </location>
</feature>
<feature type="compositionally biased region" description="Low complexity" evidence="2">
    <location>
        <begin position="158"/>
        <end position="167"/>
    </location>
</feature>
<evidence type="ECO:0000255" key="1">
    <source>
        <dbReference type="HAMAP-Rule" id="MF_00749"/>
    </source>
</evidence>
<evidence type="ECO:0000256" key="2">
    <source>
        <dbReference type="SAM" id="MobiDB-lite"/>
    </source>
</evidence>
<proteinExistence type="inferred from homology"/>
<name>PROQ_CROS8</name>
<comment type="function">
    <text evidence="1">RNA chaperone with significant RNA binding, RNA strand exchange and RNA duplexing activities. May regulate ProP activity through an RNA-based, post-transcriptional mechanism.</text>
</comment>
<comment type="subcellular location">
    <subcellularLocation>
        <location evidence="1">Cytoplasm</location>
    </subcellularLocation>
</comment>
<comment type="similarity">
    <text evidence="1">Belongs to the ProQ family.</text>
</comment>
<accession>A7MKG2</accession>
<protein>
    <recommendedName>
        <fullName evidence="1">RNA chaperone ProQ</fullName>
    </recommendedName>
</protein>
<dbReference type="EMBL" id="CP000783">
    <property type="protein sequence ID" value="ABU76677.1"/>
    <property type="molecule type" value="Genomic_DNA"/>
</dbReference>
<dbReference type="RefSeq" id="WP_004386681.1">
    <property type="nucleotide sequence ID" value="NC_009778.1"/>
</dbReference>
<dbReference type="SMR" id="A7MKG2"/>
<dbReference type="GeneID" id="56730265"/>
<dbReference type="KEGG" id="esa:ESA_01419"/>
<dbReference type="HOGENOM" id="CLU_113254_0_0_6"/>
<dbReference type="Proteomes" id="UP000000260">
    <property type="component" value="Chromosome"/>
</dbReference>
<dbReference type="GO" id="GO:0005829">
    <property type="term" value="C:cytosol"/>
    <property type="evidence" value="ECO:0007669"/>
    <property type="project" value="TreeGrafter"/>
</dbReference>
<dbReference type="GO" id="GO:0033592">
    <property type="term" value="F:RNA strand annealing activity"/>
    <property type="evidence" value="ECO:0007669"/>
    <property type="project" value="UniProtKB-UniRule"/>
</dbReference>
<dbReference type="GO" id="GO:0034057">
    <property type="term" value="F:RNA strand-exchange activity"/>
    <property type="evidence" value="ECO:0007669"/>
    <property type="project" value="UniProtKB-UniRule"/>
</dbReference>
<dbReference type="GO" id="GO:0010608">
    <property type="term" value="P:post-transcriptional regulation of gene expression"/>
    <property type="evidence" value="ECO:0007669"/>
    <property type="project" value="InterPro"/>
</dbReference>
<dbReference type="FunFam" id="1.10.1710.10:FF:000001">
    <property type="entry name" value="RNA chaperone ProQ"/>
    <property type="match status" value="1"/>
</dbReference>
<dbReference type="Gene3D" id="1.10.1710.10">
    <property type="entry name" value="ProQ/FinO domain"/>
    <property type="match status" value="1"/>
</dbReference>
<dbReference type="HAMAP" id="MF_00749">
    <property type="entry name" value="ProQ"/>
    <property type="match status" value="1"/>
</dbReference>
<dbReference type="InterPro" id="IPR023529">
    <property type="entry name" value="ProQ"/>
</dbReference>
<dbReference type="InterPro" id="IPR016103">
    <property type="entry name" value="ProQ/FinO"/>
</dbReference>
<dbReference type="InterPro" id="IPR036442">
    <property type="entry name" value="ProQ/FinO_sf"/>
</dbReference>
<dbReference type="InterPro" id="IPR035236">
    <property type="entry name" value="ProQ_C"/>
</dbReference>
<dbReference type="NCBIfam" id="NF003434">
    <property type="entry name" value="PRK04950.1"/>
    <property type="match status" value="1"/>
</dbReference>
<dbReference type="PANTHER" id="PTHR38106">
    <property type="entry name" value="RNA CHAPERONE PROQ"/>
    <property type="match status" value="1"/>
</dbReference>
<dbReference type="PANTHER" id="PTHR38106:SF1">
    <property type="entry name" value="RNA CHAPERONE PROQ"/>
    <property type="match status" value="1"/>
</dbReference>
<dbReference type="Pfam" id="PF04352">
    <property type="entry name" value="ProQ"/>
    <property type="match status" value="1"/>
</dbReference>
<dbReference type="Pfam" id="PF17516">
    <property type="entry name" value="ProQ_C"/>
    <property type="match status" value="1"/>
</dbReference>
<dbReference type="SMART" id="SM00945">
    <property type="entry name" value="ProQ"/>
    <property type="match status" value="1"/>
</dbReference>
<dbReference type="SUPFAM" id="SSF48657">
    <property type="entry name" value="FinO-like"/>
    <property type="match status" value="1"/>
</dbReference>
<sequence length="230" mass="25588">MENQPKLNSSKEVIAFLAERFPQCFSAEGEARPLKIGIFQDLVERVEGEMNLSKTQLRSALRLYTSSWRYLYGIKPGATRVDLDGNPCGVLEEQHVEHARKQLEEAKARVQAQRAEQQAKKREAAGAEGEENGAERRERKPRPAPRRKDNAERKPRAAKPAAAAKPSRPAREERHTPVSDITALSVGQAIKVKAGNNAMDATVQEITKDGVRVQLTSGMSMIVRAEHLVF</sequence>